<organism>
    <name type="scientific">Staphylococcus aureus (strain Mu50 / ATCC 700699)</name>
    <dbReference type="NCBI Taxonomy" id="158878"/>
    <lineage>
        <taxon>Bacteria</taxon>
        <taxon>Bacillati</taxon>
        <taxon>Bacillota</taxon>
        <taxon>Bacilli</taxon>
        <taxon>Bacillales</taxon>
        <taxon>Staphylococcaceae</taxon>
        <taxon>Staphylococcus</taxon>
    </lineage>
</organism>
<keyword id="KW-0963">Cytoplasm</keyword>
<keyword id="KW-0350">Heme biosynthesis</keyword>
<keyword id="KW-0408">Iron</keyword>
<keyword id="KW-0456">Lyase</keyword>
<keyword id="KW-0479">Metal-binding</keyword>
<keyword id="KW-0627">Porphyrin biosynthesis</keyword>
<proteinExistence type="inferred from homology"/>
<feature type="chain" id="PRO_0000175202" description="Coproporphyrin III ferrochelatase">
    <location>
        <begin position="1"/>
        <end position="307"/>
    </location>
</feature>
<feature type="binding site" description="axial binding residue" evidence="1">
    <location>
        <position position="12"/>
    </location>
    <ligand>
        <name>Fe-coproporphyrin III</name>
        <dbReference type="ChEBI" id="CHEBI:68438"/>
    </ligand>
    <ligandPart>
        <name>Fe</name>
        <dbReference type="ChEBI" id="CHEBI:18248"/>
    </ligandPart>
</feature>
<feature type="binding site" evidence="1">
    <location>
        <position position="29"/>
    </location>
    <ligand>
        <name>Fe-coproporphyrin III</name>
        <dbReference type="ChEBI" id="CHEBI:68438"/>
    </ligand>
</feature>
<feature type="binding site" evidence="1">
    <location>
        <begin position="45"/>
        <end position="46"/>
    </location>
    <ligand>
        <name>Fe-coproporphyrin III</name>
        <dbReference type="ChEBI" id="CHEBI:68438"/>
    </ligand>
</feature>
<feature type="binding site" evidence="1">
    <location>
        <position position="53"/>
    </location>
    <ligand>
        <name>Fe-coproporphyrin III</name>
        <dbReference type="ChEBI" id="CHEBI:68438"/>
    </ligand>
</feature>
<feature type="binding site" evidence="1">
    <location>
        <position position="124"/>
    </location>
    <ligand>
        <name>Fe-coproporphyrin III</name>
        <dbReference type="ChEBI" id="CHEBI:68438"/>
    </ligand>
</feature>
<feature type="binding site" evidence="1">
    <location>
        <position position="181"/>
    </location>
    <ligand>
        <name>Fe(2+)</name>
        <dbReference type="ChEBI" id="CHEBI:29033"/>
    </ligand>
</feature>
<feature type="binding site" evidence="1">
    <location>
        <position position="263"/>
    </location>
    <ligand>
        <name>Fe(2+)</name>
        <dbReference type="ChEBI" id="CHEBI:29033"/>
    </ligand>
</feature>
<accession>P64124</accession>
<accession>Q99T43</accession>
<comment type="function">
    <text evidence="1">Involved in coproporphyrin-dependent heme b biosynthesis. Catalyzes the insertion of ferrous iron into coproporphyrin III to form Fe-coproporphyrin III.</text>
</comment>
<comment type="catalytic activity">
    <reaction evidence="1">
        <text>Fe-coproporphyrin III + 2 H(+) = coproporphyrin III + Fe(2+)</text>
        <dbReference type="Rhea" id="RHEA:49572"/>
        <dbReference type="ChEBI" id="CHEBI:15378"/>
        <dbReference type="ChEBI" id="CHEBI:29033"/>
        <dbReference type="ChEBI" id="CHEBI:68438"/>
        <dbReference type="ChEBI" id="CHEBI:131725"/>
        <dbReference type="EC" id="4.99.1.9"/>
    </reaction>
    <physiologicalReaction direction="right-to-left" evidence="1">
        <dbReference type="Rhea" id="RHEA:49574"/>
    </physiologicalReaction>
</comment>
<comment type="pathway">
    <text evidence="1">Porphyrin-containing compound metabolism; protoheme biosynthesis.</text>
</comment>
<comment type="subcellular location">
    <subcellularLocation>
        <location evidence="1">Cytoplasm</location>
    </subcellularLocation>
</comment>
<comment type="similarity">
    <text evidence="1">Belongs to the ferrochelatase family.</text>
</comment>
<sequence length="307" mass="35056">MTKKMGLLVMAYGTPYKESDIEPYYTDIRHGKRPSEEELQDLKDRYEFIGGLSPLAGTTDDQADALVSALNKAYADVEFKLYLGLKHISPFIEDAVEQMHNDGITEAITVVLAPHYSSFSVGSYDKRADEEAAKYGIQLTHVKHYYEQPKFIEYWTNKVNETLAQIPEEEHKDTVLVVSAHSLPKGLIEKNNDPYPQELEHTALLIKEQSNIEHIAIGWQSEGNTGTPWLGPDVQDLTRDLYEKHQYKNFIYTPVGFVCEHLEVLYDNDYECKVVCDDIGANYYRPKMPNTHPLFIGAIVDEIKSIF</sequence>
<name>CPFC_STAAM</name>
<dbReference type="EC" id="4.99.1.9" evidence="1"/>
<dbReference type="EMBL" id="BA000017">
    <property type="protein sequence ID" value="BAB57995.1"/>
    <property type="molecule type" value="Genomic_DNA"/>
</dbReference>
<dbReference type="SMR" id="P64124"/>
<dbReference type="KEGG" id="sav:SAV1833"/>
<dbReference type="HOGENOM" id="CLU_018884_2_1_9"/>
<dbReference type="PhylomeDB" id="P64124"/>
<dbReference type="UniPathway" id="UPA00252"/>
<dbReference type="Proteomes" id="UP000002481">
    <property type="component" value="Chromosome"/>
</dbReference>
<dbReference type="GO" id="GO:0005737">
    <property type="term" value="C:cytoplasm"/>
    <property type="evidence" value="ECO:0007669"/>
    <property type="project" value="UniProtKB-SubCell"/>
</dbReference>
<dbReference type="GO" id="GO:0004325">
    <property type="term" value="F:ferrochelatase activity"/>
    <property type="evidence" value="ECO:0007669"/>
    <property type="project" value="UniProtKB-UniRule"/>
</dbReference>
<dbReference type="GO" id="GO:0046872">
    <property type="term" value="F:metal ion binding"/>
    <property type="evidence" value="ECO:0007669"/>
    <property type="project" value="UniProtKB-KW"/>
</dbReference>
<dbReference type="GO" id="GO:0006783">
    <property type="term" value="P:heme biosynthetic process"/>
    <property type="evidence" value="ECO:0007669"/>
    <property type="project" value="UniProtKB-UniRule"/>
</dbReference>
<dbReference type="CDD" id="cd00419">
    <property type="entry name" value="Ferrochelatase_C"/>
    <property type="match status" value="1"/>
</dbReference>
<dbReference type="CDD" id="cd03411">
    <property type="entry name" value="Ferrochelatase_N"/>
    <property type="match status" value="1"/>
</dbReference>
<dbReference type="FunFam" id="3.40.50.1400:FF:000009">
    <property type="entry name" value="Ferrochelatase"/>
    <property type="match status" value="1"/>
</dbReference>
<dbReference type="Gene3D" id="3.40.50.1400">
    <property type="match status" value="2"/>
</dbReference>
<dbReference type="HAMAP" id="MF_00323">
    <property type="entry name" value="Ferrochelatase"/>
    <property type="match status" value="1"/>
</dbReference>
<dbReference type="InterPro" id="IPR001015">
    <property type="entry name" value="Ferrochelatase"/>
</dbReference>
<dbReference type="InterPro" id="IPR019772">
    <property type="entry name" value="Ferrochelatase_AS"/>
</dbReference>
<dbReference type="InterPro" id="IPR033644">
    <property type="entry name" value="Ferrochelatase_C"/>
</dbReference>
<dbReference type="InterPro" id="IPR033659">
    <property type="entry name" value="Ferrochelatase_N"/>
</dbReference>
<dbReference type="NCBIfam" id="TIGR00109">
    <property type="entry name" value="hemH"/>
    <property type="match status" value="1"/>
</dbReference>
<dbReference type="NCBIfam" id="NF009095">
    <property type="entry name" value="PRK12435.1"/>
    <property type="match status" value="1"/>
</dbReference>
<dbReference type="PANTHER" id="PTHR11108">
    <property type="entry name" value="FERROCHELATASE"/>
    <property type="match status" value="1"/>
</dbReference>
<dbReference type="PANTHER" id="PTHR11108:SF1">
    <property type="entry name" value="FERROCHELATASE, MITOCHONDRIAL"/>
    <property type="match status" value="1"/>
</dbReference>
<dbReference type="Pfam" id="PF00762">
    <property type="entry name" value="Ferrochelatase"/>
    <property type="match status" value="1"/>
</dbReference>
<dbReference type="SUPFAM" id="SSF53800">
    <property type="entry name" value="Chelatase"/>
    <property type="match status" value="1"/>
</dbReference>
<dbReference type="PROSITE" id="PS00534">
    <property type="entry name" value="FERROCHELATASE"/>
    <property type="match status" value="1"/>
</dbReference>
<protein>
    <recommendedName>
        <fullName evidence="1">Coproporphyrin III ferrochelatase</fullName>
        <ecNumber evidence="1">4.99.1.9</ecNumber>
    </recommendedName>
</protein>
<evidence type="ECO:0000255" key="1">
    <source>
        <dbReference type="HAMAP-Rule" id="MF_00323"/>
    </source>
</evidence>
<gene>
    <name evidence="1" type="primary">cpfC</name>
    <name type="ordered locus">SAV1833</name>
</gene>
<reference key="1">
    <citation type="journal article" date="2001" name="Lancet">
        <title>Whole genome sequencing of meticillin-resistant Staphylococcus aureus.</title>
        <authorList>
            <person name="Kuroda M."/>
            <person name="Ohta T."/>
            <person name="Uchiyama I."/>
            <person name="Baba T."/>
            <person name="Yuzawa H."/>
            <person name="Kobayashi I."/>
            <person name="Cui L."/>
            <person name="Oguchi A."/>
            <person name="Aoki K."/>
            <person name="Nagai Y."/>
            <person name="Lian J.-Q."/>
            <person name="Ito T."/>
            <person name="Kanamori M."/>
            <person name="Matsumaru H."/>
            <person name="Maruyama A."/>
            <person name="Murakami H."/>
            <person name="Hosoyama A."/>
            <person name="Mizutani-Ui Y."/>
            <person name="Takahashi N.K."/>
            <person name="Sawano T."/>
            <person name="Inoue R."/>
            <person name="Kaito C."/>
            <person name="Sekimizu K."/>
            <person name="Hirakawa H."/>
            <person name="Kuhara S."/>
            <person name="Goto S."/>
            <person name="Yabuzaki J."/>
            <person name="Kanehisa M."/>
            <person name="Yamashita A."/>
            <person name="Oshima K."/>
            <person name="Furuya K."/>
            <person name="Yoshino C."/>
            <person name="Shiba T."/>
            <person name="Hattori M."/>
            <person name="Ogasawara N."/>
            <person name="Hayashi H."/>
            <person name="Hiramatsu K."/>
        </authorList>
    </citation>
    <scope>NUCLEOTIDE SEQUENCE [LARGE SCALE GENOMIC DNA]</scope>
    <source>
        <strain>Mu50 / ATCC 700699</strain>
    </source>
</reference>